<feature type="chain" id="PRO_0000428664" description="La protein 1">
    <location>
        <begin position="1"/>
        <end position="433"/>
    </location>
</feature>
<feature type="domain" description="HTH La-type RNA-binding" evidence="2">
    <location>
        <begin position="4"/>
        <end position="108"/>
    </location>
</feature>
<feature type="domain" description="RRM" evidence="1">
    <location>
        <begin position="116"/>
        <end position="193"/>
    </location>
</feature>
<feature type="domain" description="xRRM" evidence="3">
    <location>
        <begin position="298"/>
        <end position="419"/>
    </location>
</feature>
<feature type="region of interest" description="Disordered" evidence="4">
    <location>
        <begin position="206"/>
        <end position="233"/>
    </location>
</feature>
<feature type="region of interest" description="Disordered" evidence="4">
    <location>
        <begin position="245"/>
        <end position="310"/>
    </location>
</feature>
<feature type="region of interest" description="Disordered" evidence="4">
    <location>
        <begin position="395"/>
        <end position="433"/>
    </location>
</feature>
<feature type="compositionally biased region" description="Polar residues" evidence="4">
    <location>
        <begin position="208"/>
        <end position="219"/>
    </location>
</feature>
<feature type="compositionally biased region" description="Basic and acidic residues" evidence="4">
    <location>
        <begin position="255"/>
        <end position="283"/>
    </location>
</feature>
<feature type="compositionally biased region" description="Basic and acidic residues" evidence="4">
    <location>
        <begin position="299"/>
        <end position="310"/>
    </location>
</feature>
<feature type="compositionally biased region" description="Basic residues" evidence="4">
    <location>
        <begin position="404"/>
        <end position="415"/>
    </location>
</feature>
<feature type="splice variant" id="VSP_054170" description="In isoform 2." evidence="6">
    <location>
        <begin position="405"/>
        <end position="433"/>
    </location>
</feature>
<feature type="sequence conflict" description="In Ref. 3; AAM96968/AAN15715." evidence="6" ref="3">
    <original>P</original>
    <variation>Q</variation>
    <location>
        <position position="231"/>
    </location>
</feature>
<keyword id="KW-0025">Alternative splicing</keyword>
<keyword id="KW-0539">Nucleus</keyword>
<keyword id="KW-1185">Reference proteome</keyword>
<keyword id="KW-0694">RNA-binding</keyword>
<comment type="function">
    <text evidence="5">Binds to the 3' poly(U) terminus of nascent RNA polymerase III transcripts, protecting them from exonuclease digestion and facilitating their folding and maturation.</text>
</comment>
<comment type="subcellular location">
    <subcellularLocation>
        <location evidence="5">Nucleus</location>
        <location evidence="5">Nucleoplasm</location>
    </subcellularLocation>
    <subcellularLocation>
        <location evidence="5">Nucleus</location>
        <location evidence="5">Nucleolus</location>
    </subcellularLocation>
</comment>
<comment type="alternative products">
    <event type="alternative splicing"/>
    <isoform>
        <id>Q93ZV7-1</id>
        <name>1</name>
        <sequence type="displayed"/>
    </isoform>
    <isoform>
        <id>Q93ZV7-2</id>
        <name>2</name>
        <sequence type="described" ref="VSP_054170"/>
    </isoform>
</comment>
<comment type="tissue specificity">
    <text evidence="5">Expressed ubiquitously (at protein level).</text>
</comment>
<comment type="disruption phenotype">
    <text evidence="5">Embryonic-lethal with deficient embryos arrested at early globular stage of development characterized by nucleolar hypertrophy.</text>
</comment>
<comment type="sequence caution" evidence="6">
    <conflict type="erroneous gene model prediction">
        <sequence resource="EMBL-CDS" id="CAA18589"/>
    </conflict>
</comment>
<comment type="sequence caution" evidence="6">
    <conflict type="erroneous gene model prediction">
        <sequence resource="EMBL-CDS" id="CAB79989"/>
    </conflict>
</comment>
<gene>
    <name type="primary">LA1</name>
    <name type="ordered locus">At4g32720</name>
    <name type="ORF">F4D11.80</name>
</gene>
<organism>
    <name type="scientific">Arabidopsis thaliana</name>
    <name type="common">Mouse-ear cress</name>
    <dbReference type="NCBI Taxonomy" id="3702"/>
    <lineage>
        <taxon>Eukaryota</taxon>
        <taxon>Viridiplantae</taxon>
        <taxon>Streptophyta</taxon>
        <taxon>Embryophyta</taxon>
        <taxon>Tracheophyta</taxon>
        <taxon>Spermatophyta</taxon>
        <taxon>Magnoliopsida</taxon>
        <taxon>eudicotyledons</taxon>
        <taxon>Gunneridae</taxon>
        <taxon>Pentapetalae</taxon>
        <taxon>rosids</taxon>
        <taxon>malvids</taxon>
        <taxon>Brassicales</taxon>
        <taxon>Brassicaceae</taxon>
        <taxon>Camelineae</taxon>
        <taxon>Arabidopsis</taxon>
    </lineage>
</organism>
<name>LA1_ARATH</name>
<dbReference type="EMBL" id="AL022537">
    <property type="protein sequence ID" value="CAA18589.1"/>
    <property type="status" value="ALT_SEQ"/>
    <property type="molecule type" value="Genomic_DNA"/>
</dbReference>
<dbReference type="EMBL" id="AL161582">
    <property type="protein sequence ID" value="CAB79989.1"/>
    <property type="status" value="ALT_SEQ"/>
    <property type="molecule type" value="Genomic_DNA"/>
</dbReference>
<dbReference type="EMBL" id="CP002687">
    <property type="protein sequence ID" value="AEE86109.1"/>
    <property type="molecule type" value="Genomic_DNA"/>
</dbReference>
<dbReference type="EMBL" id="CP002687">
    <property type="protein sequence ID" value="AEE86110.1"/>
    <property type="molecule type" value="Genomic_DNA"/>
</dbReference>
<dbReference type="EMBL" id="AY056237">
    <property type="protein sequence ID" value="AAL07086.1"/>
    <property type="molecule type" value="mRNA"/>
</dbReference>
<dbReference type="EMBL" id="AY136302">
    <property type="protein sequence ID" value="AAM96968.1"/>
    <property type="molecule type" value="mRNA"/>
</dbReference>
<dbReference type="EMBL" id="BT000396">
    <property type="protein sequence ID" value="AAN15715.1"/>
    <property type="molecule type" value="mRNA"/>
</dbReference>
<dbReference type="PIR" id="T04453">
    <property type="entry name" value="T04453"/>
</dbReference>
<dbReference type="RefSeq" id="NP_001031777.1">
    <molecule id="Q93ZV7-2"/>
    <property type="nucleotide sequence ID" value="NM_001036700.2"/>
</dbReference>
<dbReference type="RefSeq" id="NP_567904.1">
    <molecule id="Q93ZV7-1"/>
    <property type="nucleotide sequence ID" value="NM_119425.5"/>
</dbReference>
<dbReference type="SMR" id="Q93ZV7"/>
<dbReference type="BioGRID" id="14694">
    <property type="interactions" value="7"/>
</dbReference>
<dbReference type="FunCoup" id="Q93ZV7">
    <property type="interactions" value="4388"/>
</dbReference>
<dbReference type="STRING" id="3702.Q93ZV7"/>
<dbReference type="iPTMnet" id="Q93ZV7"/>
<dbReference type="PaxDb" id="3702-AT4G32720.1"/>
<dbReference type="ProteomicsDB" id="237144">
    <molecule id="Q93ZV7-1"/>
</dbReference>
<dbReference type="EnsemblPlants" id="AT4G32720.1">
    <molecule id="Q93ZV7-1"/>
    <property type="protein sequence ID" value="AT4G32720.1"/>
    <property type="gene ID" value="AT4G32720"/>
</dbReference>
<dbReference type="EnsemblPlants" id="AT4G32720.2">
    <molecule id="Q93ZV7-2"/>
    <property type="protein sequence ID" value="AT4G32720.2"/>
    <property type="gene ID" value="AT4G32720"/>
</dbReference>
<dbReference type="GeneID" id="829408"/>
<dbReference type="Gramene" id="AT4G32720.1">
    <molecule id="Q93ZV7-1"/>
    <property type="protein sequence ID" value="AT4G32720.1"/>
    <property type="gene ID" value="AT4G32720"/>
</dbReference>
<dbReference type="Gramene" id="AT4G32720.2">
    <molecule id="Q93ZV7-2"/>
    <property type="protein sequence ID" value="AT4G32720.2"/>
    <property type="gene ID" value="AT4G32720"/>
</dbReference>
<dbReference type="KEGG" id="ath:AT4G32720"/>
<dbReference type="Araport" id="AT4G32720"/>
<dbReference type="TAIR" id="AT4G32720">
    <property type="gene designation" value="LA1"/>
</dbReference>
<dbReference type="eggNOG" id="KOG0118">
    <property type="taxonomic scope" value="Eukaryota"/>
</dbReference>
<dbReference type="InParanoid" id="Q93ZV7"/>
<dbReference type="OMA" id="QFERSIY"/>
<dbReference type="OrthoDB" id="439993at2759"/>
<dbReference type="PhylomeDB" id="Q93ZV7"/>
<dbReference type="CD-CODE" id="4299E36E">
    <property type="entry name" value="Nucleolus"/>
</dbReference>
<dbReference type="PRO" id="PR:Q93ZV7"/>
<dbReference type="Proteomes" id="UP000006548">
    <property type="component" value="Chromosome 4"/>
</dbReference>
<dbReference type="ExpressionAtlas" id="Q93ZV7">
    <property type="expression patterns" value="baseline and differential"/>
</dbReference>
<dbReference type="GO" id="GO:0005730">
    <property type="term" value="C:nucleolus"/>
    <property type="evidence" value="ECO:0000314"/>
    <property type="project" value="UniProtKB"/>
</dbReference>
<dbReference type="GO" id="GO:0005654">
    <property type="term" value="C:nucleoplasm"/>
    <property type="evidence" value="ECO:0000314"/>
    <property type="project" value="TAIR"/>
</dbReference>
<dbReference type="GO" id="GO:0005634">
    <property type="term" value="C:nucleus"/>
    <property type="evidence" value="ECO:0000314"/>
    <property type="project" value="TAIR"/>
</dbReference>
<dbReference type="GO" id="GO:0009505">
    <property type="term" value="C:plant-type cell wall"/>
    <property type="evidence" value="ECO:0007005"/>
    <property type="project" value="TAIR"/>
</dbReference>
<dbReference type="GO" id="GO:1990904">
    <property type="term" value="C:ribonucleoprotein complex"/>
    <property type="evidence" value="ECO:0007669"/>
    <property type="project" value="InterPro"/>
</dbReference>
<dbReference type="GO" id="GO:0003729">
    <property type="term" value="F:mRNA binding"/>
    <property type="evidence" value="ECO:0000314"/>
    <property type="project" value="TAIR"/>
</dbReference>
<dbReference type="GO" id="GO:0003723">
    <property type="term" value="F:RNA binding"/>
    <property type="evidence" value="ECO:0000314"/>
    <property type="project" value="TAIR"/>
</dbReference>
<dbReference type="GO" id="GO:0009793">
    <property type="term" value="P:embryo development ending in seed dormancy"/>
    <property type="evidence" value="ECO:0000315"/>
    <property type="project" value="TAIR"/>
</dbReference>
<dbReference type="GO" id="GO:0042254">
    <property type="term" value="P:ribosome biogenesis"/>
    <property type="evidence" value="ECO:0000315"/>
    <property type="project" value="TAIR"/>
</dbReference>
<dbReference type="GO" id="GO:0006364">
    <property type="term" value="P:rRNA processing"/>
    <property type="evidence" value="ECO:0000315"/>
    <property type="project" value="TAIR"/>
</dbReference>
<dbReference type="GO" id="GO:0031126">
    <property type="term" value="P:sno(s)RNA 3'-end processing"/>
    <property type="evidence" value="ECO:0000314"/>
    <property type="project" value="UniProtKB"/>
</dbReference>
<dbReference type="GO" id="GO:0042780">
    <property type="term" value="P:tRNA 3'-end processing"/>
    <property type="evidence" value="ECO:0000314"/>
    <property type="project" value="UniProtKB"/>
</dbReference>
<dbReference type="CDD" id="cd08030">
    <property type="entry name" value="LA_like_plant"/>
    <property type="match status" value="1"/>
</dbReference>
<dbReference type="CDD" id="cd12291">
    <property type="entry name" value="RRM1_La"/>
    <property type="match status" value="1"/>
</dbReference>
<dbReference type="FunFam" id="1.10.10.10:FF:000795">
    <property type="entry name" value="La protein 2"/>
    <property type="match status" value="1"/>
</dbReference>
<dbReference type="FunFam" id="3.30.70.330:FF:001017">
    <property type="entry name" value="La protein 2"/>
    <property type="match status" value="1"/>
</dbReference>
<dbReference type="Gene3D" id="3.30.70.330">
    <property type="match status" value="2"/>
</dbReference>
<dbReference type="Gene3D" id="1.10.10.10">
    <property type="entry name" value="Winged helix-like DNA-binding domain superfamily/Winged helix DNA-binding domain"/>
    <property type="match status" value="1"/>
</dbReference>
<dbReference type="InterPro" id="IPR045180">
    <property type="entry name" value="La_dom_prot"/>
</dbReference>
<dbReference type="InterPro" id="IPR006630">
    <property type="entry name" value="La_HTH"/>
</dbReference>
<dbReference type="InterPro" id="IPR014886">
    <property type="entry name" value="La_xRRM"/>
</dbReference>
<dbReference type="InterPro" id="IPR002344">
    <property type="entry name" value="Lupus_La"/>
</dbReference>
<dbReference type="InterPro" id="IPR012677">
    <property type="entry name" value="Nucleotide-bd_a/b_plait_sf"/>
</dbReference>
<dbReference type="InterPro" id="IPR035979">
    <property type="entry name" value="RBD_domain_sf"/>
</dbReference>
<dbReference type="InterPro" id="IPR000504">
    <property type="entry name" value="RRM_dom"/>
</dbReference>
<dbReference type="InterPro" id="IPR036388">
    <property type="entry name" value="WH-like_DNA-bd_sf"/>
</dbReference>
<dbReference type="InterPro" id="IPR036390">
    <property type="entry name" value="WH_DNA-bd_sf"/>
</dbReference>
<dbReference type="PANTHER" id="PTHR22792:SF140">
    <property type="entry name" value="ACHILLES, ISOFORM A"/>
    <property type="match status" value="1"/>
</dbReference>
<dbReference type="PANTHER" id="PTHR22792">
    <property type="entry name" value="LUPUS LA PROTEIN-RELATED"/>
    <property type="match status" value="1"/>
</dbReference>
<dbReference type="Pfam" id="PF05383">
    <property type="entry name" value="La"/>
    <property type="match status" value="1"/>
</dbReference>
<dbReference type="Pfam" id="PF00076">
    <property type="entry name" value="RRM_1"/>
    <property type="match status" value="1"/>
</dbReference>
<dbReference type="Pfam" id="PF08777">
    <property type="entry name" value="RRM_3"/>
    <property type="match status" value="1"/>
</dbReference>
<dbReference type="PRINTS" id="PR00302">
    <property type="entry name" value="LUPUSLA"/>
</dbReference>
<dbReference type="SMART" id="SM00715">
    <property type="entry name" value="LA"/>
    <property type="match status" value="1"/>
</dbReference>
<dbReference type="SMART" id="SM00360">
    <property type="entry name" value="RRM"/>
    <property type="match status" value="1"/>
</dbReference>
<dbReference type="SUPFAM" id="SSF54928">
    <property type="entry name" value="RNA-binding domain, RBD"/>
    <property type="match status" value="1"/>
</dbReference>
<dbReference type="SUPFAM" id="SSF46785">
    <property type="entry name" value="Winged helix' DNA-binding domain"/>
    <property type="match status" value="1"/>
</dbReference>
<dbReference type="PROSITE" id="PS50961">
    <property type="entry name" value="HTH_LA"/>
    <property type="match status" value="1"/>
</dbReference>
<dbReference type="PROSITE" id="PS50102">
    <property type="entry name" value="RRM"/>
    <property type="match status" value="1"/>
</dbReference>
<dbReference type="PROSITE" id="PS51939">
    <property type="entry name" value="XRRM"/>
    <property type="match status" value="1"/>
</dbReference>
<proteinExistence type="evidence at protein level"/>
<evidence type="ECO:0000255" key="1">
    <source>
        <dbReference type="PROSITE-ProRule" id="PRU00176"/>
    </source>
</evidence>
<evidence type="ECO:0000255" key="2">
    <source>
        <dbReference type="PROSITE-ProRule" id="PRU00332"/>
    </source>
</evidence>
<evidence type="ECO:0000255" key="3">
    <source>
        <dbReference type="PROSITE-ProRule" id="PRU01288"/>
    </source>
</evidence>
<evidence type="ECO:0000256" key="4">
    <source>
        <dbReference type="SAM" id="MobiDB-lite"/>
    </source>
</evidence>
<evidence type="ECO:0000269" key="5">
    <source>
    </source>
</evidence>
<evidence type="ECO:0000305" key="6"/>
<reference key="1">
    <citation type="journal article" date="1999" name="Nature">
        <title>Sequence and analysis of chromosome 4 of the plant Arabidopsis thaliana.</title>
        <authorList>
            <person name="Mayer K.F.X."/>
            <person name="Schueller C."/>
            <person name="Wambutt R."/>
            <person name="Murphy G."/>
            <person name="Volckaert G."/>
            <person name="Pohl T."/>
            <person name="Duesterhoeft A."/>
            <person name="Stiekema W."/>
            <person name="Entian K.-D."/>
            <person name="Terryn N."/>
            <person name="Harris B."/>
            <person name="Ansorge W."/>
            <person name="Brandt P."/>
            <person name="Grivell L.A."/>
            <person name="Rieger M."/>
            <person name="Weichselgartner M."/>
            <person name="de Simone V."/>
            <person name="Obermaier B."/>
            <person name="Mache R."/>
            <person name="Mueller M."/>
            <person name="Kreis M."/>
            <person name="Delseny M."/>
            <person name="Puigdomenech P."/>
            <person name="Watson M."/>
            <person name="Schmidtheini T."/>
            <person name="Reichert B."/>
            <person name="Portetelle D."/>
            <person name="Perez-Alonso M."/>
            <person name="Boutry M."/>
            <person name="Bancroft I."/>
            <person name="Vos P."/>
            <person name="Hoheisel J."/>
            <person name="Zimmermann W."/>
            <person name="Wedler H."/>
            <person name="Ridley P."/>
            <person name="Langham S.-A."/>
            <person name="McCullagh B."/>
            <person name="Bilham L."/>
            <person name="Robben J."/>
            <person name="van der Schueren J."/>
            <person name="Grymonprez B."/>
            <person name="Chuang Y.-J."/>
            <person name="Vandenbussche F."/>
            <person name="Braeken M."/>
            <person name="Weltjens I."/>
            <person name="Voet M."/>
            <person name="Bastiaens I."/>
            <person name="Aert R."/>
            <person name="Defoor E."/>
            <person name="Weitzenegger T."/>
            <person name="Bothe G."/>
            <person name="Ramsperger U."/>
            <person name="Hilbert H."/>
            <person name="Braun M."/>
            <person name="Holzer E."/>
            <person name="Brandt A."/>
            <person name="Peters S."/>
            <person name="van Staveren M."/>
            <person name="Dirkse W."/>
            <person name="Mooijman P."/>
            <person name="Klein Lankhorst R."/>
            <person name="Rose M."/>
            <person name="Hauf J."/>
            <person name="Koetter P."/>
            <person name="Berneiser S."/>
            <person name="Hempel S."/>
            <person name="Feldpausch M."/>
            <person name="Lamberth S."/>
            <person name="Van den Daele H."/>
            <person name="De Keyser A."/>
            <person name="Buysshaert C."/>
            <person name="Gielen J."/>
            <person name="Villarroel R."/>
            <person name="De Clercq R."/>
            <person name="van Montagu M."/>
            <person name="Rogers J."/>
            <person name="Cronin A."/>
            <person name="Quail M.A."/>
            <person name="Bray-Allen S."/>
            <person name="Clark L."/>
            <person name="Doggett J."/>
            <person name="Hall S."/>
            <person name="Kay M."/>
            <person name="Lennard N."/>
            <person name="McLay K."/>
            <person name="Mayes R."/>
            <person name="Pettett A."/>
            <person name="Rajandream M.A."/>
            <person name="Lyne M."/>
            <person name="Benes V."/>
            <person name="Rechmann S."/>
            <person name="Borkova D."/>
            <person name="Bloecker H."/>
            <person name="Scharfe M."/>
            <person name="Grimm M."/>
            <person name="Loehnert T.-H."/>
            <person name="Dose S."/>
            <person name="de Haan M."/>
            <person name="Maarse A.C."/>
            <person name="Schaefer M."/>
            <person name="Mueller-Auer S."/>
            <person name="Gabel C."/>
            <person name="Fuchs M."/>
            <person name="Fartmann B."/>
            <person name="Granderath K."/>
            <person name="Dauner D."/>
            <person name="Herzl A."/>
            <person name="Neumann S."/>
            <person name="Argiriou A."/>
            <person name="Vitale D."/>
            <person name="Liguori R."/>
            <person name="Piravandi E."/>
            <person name="Massenet O."/>
            <person name="Quigley F."/>
            <person name="Clabauld G."/>
            <person name="Muendlein A."/>
            <person name="Felber R."/>
            <person name="Schnabl S."/>
            <person name="Hiller R."/>
            <person name="Schmidt W."/>
            <person name="Lecharny A."/>
            <person name="Aubourg S."/>
            <person name="Chefdor F."/>
            <person name="Cooke R."/>
            <person name="Berger C."/>
            <person name="Monfort A."/>
            <person name="Casacuberta E."/>
            <person name="Gibbons T."/>
            <person name="Weber N."/>
            <person name="Vandenbol M."/>
            <person name="Bargues M."/>
            <person name="Terol J."/>
            <person name="Torres A."/>
            <person name="Perez-Perez A."/>
            <person name="Purnelle B."/>
            <person name="Bent E."/>
            <person name="Johnson S."/>
            <person name="Tacon D."/>
            <person name="Jesse T."/>
            <person name="Heijnen L."/>
            <person name="Schwarz S."/>
            <person name="Scholler P."/>
            <person name="Heber S."/>
            <person name="Francs P."/>
            <person name="Bielke C."/>
            <person name="Frishman D."/>
            <person name="Haase D."/>
            <person name="Lemcke K."/>
            <person name="Mewes H.-W."/>
            <person name="Stocker S."/>
            <person name="Zaccaria P."/>
            <person name="Bevan M."/>
            <person name="Wilson R.K."/>
            <person name="de la Bastide M."/>
            <person name="Habermann K."/>
            <person name="Parnell L."/>
            <person name="Dedhia N."/>
            <person name="Gnoj L."/>
            <person name="Schutz K."/>
            <person name="Huang E."/>
            <person name="Spiegel L."/>
            <person name="Sekhon M."/>
            <person name="Murray J."/>
            <person name="Sheet P."/>
            <person name="Cordes M."/>
            <person name="Abu-Threideh J."/>
            <person name="Stoneking T."/>
            <person name="Kalicki J."/>
            <person name="Graves T."/>
            <person name="Harmon G."/>
            <person name="Edwards J."/>
            <person name="Latreille P."/>
            <person name="Courtney L."/>
            <person name="Cloud J."/>
            <person name="Abbott A."/>
            <person name="Scott K."/>
            <person name="Johnson D."/>
            <person name="Minx P."/>
            <person name="Bentley D."/>
            <person name="Fulton B."/>
            <person name="Miller N."/>
            <person name="Greco T."/>
            <person name="Kemp K."/>
            <person name="Kramer J."/>
            <person name="Fulton L."/>
            <person name="Mardis E."/>
            <person name="Dante M."/>
            <person name="Pepin K."/>
            <person name="Hillier L.W."/>
            <person name="Nelson J."/>
            <person name="Spieth J."/>
            <person name="Ryan E."/>
            <person name="Andrews S."/>
            <person name="Geisel C."/>
            <person name="Layman D."/>
            <person name="Du H."/>
            <person name="Ali J."/>
            <person name="Berghoff A."/>
            <person name="Jones K."/>
            <person name="Drone K."/>
            <person name="Cotton M."/>
            <person name="Joshu C."/>
            <person name="Antonoiu B."/>
            <person name="Zidanic M."/>
            <person name="Strong C."/>
            <person name="Sun H."/>
            <person name="Lamar B."/>
            <person name="Yordan C."/>
            <person name="Ma P."/>
            <person name="Zhong J."/>
            <person name="Preston R."/>
            <person name="Vil D."/>
            <person name="Shekher M."/>
            <person name="Matero A."/>
            <person name="Shah R."/>
            <person name="Swaby I.K."/>
            <person name="O'Shaughnessy A."/>
            <person name="Rodriguez M."/>
            <person name="Hoffman J."/>
            <person name="Till S."/>
            <person name="Granat S."/>
            <person name="Shohdy N."/>
            <person name="Hasegawa A."/>
            <person name="Hameed A."/>
            <person name="Lodhi M."/>
            <person name="Johnson A."/>
            <person name="Chen E."/>
            <person name="Marra M.A."/>
            <person name="Martienssen R."/>
            <person name="McCombie W.R."/>
        </authorList>
    </citation>
    <scope>NUCLEOTIDE SEQUENCE [LARGE SCALE GENOMIC DNA]</scope>
    <source>
        <strain>cv. Columbia</strain>
    </source>
</reference>
<reference key="2">
    <citation type="journal article" date="2017" name="Plant J.">
        <title>Araport11: a complete reannotation of the Arabidopsis thaliana reference genome.</title>
        <authorList>
            <person name="Cheng C.Y."/>
            <person name="Krishnakumar V."/>
            <person name="Chan A.P."/>
            <person name="Thibaud-Nissen F."/>
            <person name="Schobel S."/>
            <person name="Town C.D."/>
        </authorList>
    </citation>
    <scope>GENOME REANNOTATION</scope>
    <source>
        <strain>cv. Columbia</strain>
    </source>
</reference>
<reference key="3">
    <citation type="journal article" date="2003" name="Science">
        <title>Empirical analysis of transcriptional activity in the Arabidopsis genome.</title>
        <authorList>
            <person name="Yamada K."/>
            <person name="Lim J."/>
            <person name="Dale J.M."/>
            <person name="Chen H."/>
            <person name="Shinn P."/>
            <person name="Palm C.J."/>
            <person name="Southwick A.M."/>
            <person name="Wu H.C."/>
            <person name="Kim C.J."/>
            <person name="Nguyen M."/>
            <person name="Pham P.K."/>
            <person name="Cheuk R.F."/>
            <person name="Karlin-Newmann G."/>
            <person name="Liu S.X."/>
            <person name="Lam B."/>
            <person name="Sakano H."/>
            <person name="Wu T."/>
            <person name="Yu G."/>
            <person name="Miranda M."/>
            <person name="Quach H.L."/>
            <person name="Tripp M."/>
            <person name="Chang C.H."/>
            <person name="Lee J.M."/>
            <person name="Toriumi M.J."/>
            <person name="Chan M.M."/>
            <person name="Tang C.C."/>
            <person name="Onodera C.S."/>
            <person name="Deng J.M."/>
            <person name="Akiyama K."/>
            <person name="Ansari Y."/>
            <person name="Arakawa T."/>
            <person name="Banh J."/>
            <person name="Banno F."/>
            <person name="Bowser L."/>
            <person name="Brooks S.Y."/>
            <person name="Carninci P."/>
            <person name="Chao Q."/>
            <person name="Choy N."/>
            <person name="Enju A."/>
            <person name="Goldsmith A.D."/>
            <person name="Gurjal M."/>
            <person name="Hansen N.F."/>
            <person name="Hayashizaki Y."/>
            <person name="Johnson-Hopson C."/>
            <person name="Hsuan V.W."/>
            <person name="Iida K."/>
            <person name="Karnes M."/>
            <person name="Khan S."/>
            <person name="Koesema E."/>
            <person name="Ishida J."/>
            <person name="Jiang P.X."/>
            <person name="Jones T."/>
            <person name="Kawai J."/>
            <person name="Kamiya A."/>
            <person name="Meyers C."/>
            <person name="Nakajima M."/>
            <person name="Narusaka M."/>
            <person name="Seki M."/>
            <person name="Sakurai T."/>
            <person name="Satou M."/>
            <person name="Tamse R."/>
            <person name="Vaysberg M."/>
            <person name="Wallender E.K."/>
            <person name="Wong C."/>
            <person name="Yamamura Y."/>
            <person name="Yuan S."/>
            <person name="Shinozaki K."/>
            <person name="Davis R.W."/>
            <person name="Theologis A."/>
            <person name="Ecker J.R."/>
        </authorList>
    </citation>
    <scope>NUCLEOTIDE SEQUENCE [LARGE SCALE MRNA]</scope>
    <source>
        <strain>cv. Columbia</strain>
    </source>
</reference>
<reference key="4">
    <citation type="journal article" date="2007" name="Nucleic Acids Res.">
        <title>A bona fide La protein is required for embryogenesis in Arabidopsis thaliana.</title>
        <authorList>
            <person name="Fleurdepine S."/>
            <person name="Deragon J.M."/>
            <person name="Devic M."/>
            <person name="Guilleminot J."/>
            <person name="Bousquet-Antonelli C."/>
        </authorList>
    </citation>
    <scope>FUNCTION</scope>
    <scope>DISRUPTION PHENOTYPE</scope>
    <scope>SUBCELLULAR LOCATION</scope>
    <scope>TISSUE SPECIFICITY</scope>
    <scope>IDENTIFICATION</scope>
    <source>
        <strain>cv. Columbia</strain>
    </source>
</reference>
<reference key="5">
    <citation type="journal article" date="2009" name="Plant Physiol.">
        <title>Large-scale Arabidopsis phosphoproteome profiling reveals novel chloroplast kinase substrates and phosphorylation networks.</title>
        <authorList>
            <person name="Reiland S."/>
            <person name="Messerli G."/>
            <person name="Baerenfaller K."/>
            <person name="Gerrits B."/>
            <person name="Endler A."/>
            <person name="Grossmann J."/>
            <person name="Gruissem W."/>
            <person name="Baginsky S."/>
        </authorList>
    </citation>
    <scope>IDENTIFICATION BY MASS SPECTROMETRY [LARGE SCALE ANALYSIS]</scope>
</reference>
<reference key="6">
    <citation type="journal article" date="2009" name="RNA">
        <title>A comprehensive analysis of the La-motif protein superfamily.</title>
        <authorList>
            <person name="Bousquet-Antonelli C."/>
            <person name="Deragon J.M."/>
        </authorList>
    </citation>
    <scope>GENE FAMILY</scope>
    <scope>NOMENCLATURE</scope>
</reference>
<protein>
    <recommendedName>
        <fullName>La protein 1</fullName>
        <shortName>AtLa1</shortName>
    </recommendedName>
</protein>
<accession>Q93ZV7</accession>
<accession>F4JV47</accession>
<accession>O65529</accession>
<accession>Q8L7E4</accession>
<sequence>MSIPCLTEETAKTVLRQVEFYFSDSNLPIDDFLKKTVTESEDGLVSLALICSFSKMRGYLKLGDSKGDDIPEDTIKAVADTLRTSSALKISDDGKKVGRSTELLKLEDLIEQLNARTVAASPFSYDVKREDVESFFSQYGKVNSVRMPRHVAESRIFSGVALVEFPTEEDAQNVMKQNLVFAGQELELKPKKEFDNEREKDEVKFANYQPQKGSANQKNGSDHKNNSAYEPDYPKGLIISFTLKRSAEEGTTEQKSSEEPTDKTMEESETKPADTPDADKENTGEVQAEGAEDEDDEKEEKGALATHKDNKDVVLREDLKAVFGKFGDVKFVDFKMGSETGYLRFDEPEASQKARAAAVLANEGGLAVKNFIAVLEPVIGEAEKEYWTLLRSKDRFDKGGRGGRGGRRGGRFGRKRGSDSPGGRWNKSQKVEA</sequence>